<organism>
    <name type="scientific">Xenopus tropicalis</name>
    <name type="common">Western clawed frog</name>
    <name type="synonym">Silurana tropicalis</name>
    <dbReference type="NCBI Taxonomy" id="8364"/>
    <lineage>
        <taxon>Eukaryota</taxon>
        <taxon>Metazoa</taxon>
        <taxon>Chordata</taxon>
        <taxon>Craniata</taxon>
        <taxon>Vertebrata</taxon>
        <taxon>Euteleostomi</taxon>
        <taxon>Amphibia</taxon>
        <taxon>Batrachia</taxon>
        <taxon>Anura</taxon>
        <taxon>Pipoidea</taxon>
        <taxon>Pipidae</taxon>
        <taxon>Xenopodinae</taxon>
        <taxon>Xenopus</taxon>
        <taxon>Silurana</taxon>
    </lineage>
</organism>
<protein>
    <recommendedName>
        <fullName>GTP cyclohydrolase 1 feedback regulatory protein</fullName>
        <shortName>GFRP</shortName>
    </recommendedName>
    <alternativeName>
        <fullName>GTP cyclohydrolase I feedback regulatory protein</fullName>
    </alternativeName>
</protein>
<gene>
    <name type="primary">gchfr</name>
    <name type="ORF">TGas035n12.1</name>
</gene>
<proteinExistence type="inferred from homology"/>
<name>GFRP_XENTR</name>
<sequence length="84" mass="9492">MPYVLISTQIRMETGPTIVGDEFSDTQLMAQLEADKRTVLGNNFSEYCVNEPPRVTLNKLEKLGYRVVSMTGVGQTLVWCLHKE</sequence>
<comment type="function">
    <text evidence="1">Mediates tetrahydrobiopterin inhibition of GTP cyclohydrolase 1.</text>
</comment>
<comment type="subunit">
    <text evidence="1">Homopentamer. Forms a complex with GCH1 where a GCH1 homodecamer is sandwiched by two GFRP homopentamers (By similarity).</text>
</comment>
<comment type="subcellular location">
    <subcellularLocation>
        <location evidence="1">Nucleus</location>
    </subcellularLocation>
    <subcellularLocation>
        <location evidence="1">Nucleus membrane</location>
    </subcellularLocation>
    <subcellularLocation>
        <location evidence="1">Cytoplasm</location>
        <location evidence="1">Cytosol</location>
    </subcellularLocation>
</comment>
<comment type="similarity">
    <text evidence="2">Belongs to the GFRP family.</text>
</comment>
<reference key="1">
    <citation type="submission" date="2006-03" db="EMBL/GenBank/DDBJ databases">
        <authorList>
            <consortium name="Sanger Xenopus tropicalis EST/cDNA project"/>
        </authorList>
    </citation>
    <scope>NUCLEOTIDE SEQUENCE [LARGE SCALE MRNA]</scope>
    <source>
        <tissue>Gastrula</tissue>
    </source>
</reference>
<reference key="2">
    <citation type="submission" date="2004-03" db="EMBL/GenBank/DDBJ databases">
        <authorList>
            <consortium name="NIH - Xenopus Gene Collection (XGC) project"/>
        </authorList>
    </citation>
    <scope>NUCLEOTIDE SEQUENCE [LARGE SCALE MRNA]</scope>
    <source>
        <tissue>Embryo</tissue>
    </source>
</reference>
<keyword id="KW-0963">Cytoplasm</keyword>
<keyword id="KW-0472">Membrane</keyword>
<keyword id="KW-0539">Nucleus</keyword>
<keyword id="KW-1185">Reference proteome</keyword>
<evidence type="ECO:0000250" key="1"/>
<evidence type="ECO:0000305" key="2"/>
<accession>Q6NVA8</accession>
<accession>Q28DT4</accession>
<dbReference type="EMBL" id="CR848610">
    <property type="protein sequence ID" value="CAJ83559.1"/>
    <property type="molecule type" value="mRNA"/>
</dbReference>
<dbReference type="EMBL" id="BC068218">
    <property type="protein sequence ID" value="AAH68218.1"/>
    <property type="molecule type" value="mRNA"/>
</dbReference>
<dbReference type="RefSeq" id="NP_998880.1">
    <property type="nucleotide sequence ID" value="NM_213715.1"/>
</dbReference>
<dbReference type="RefSeq" id="XP_017951683.1">
    <property type="nucleotide sequence ID" value="XM_018096194.2"/>
</dbReference>
<dbReference type="SMR" id="Q6NVA8"/>
<dbReference type="FunCoup" id="Q6NVA8">
    <property type="interactions" value="724"/>
</dbReference>
<dbReference type="STRING" id="8364.ENSXETP00000053766"/>
<dbReference type="PaxDb" id="8364-ENSXETP00000046573"/>
<dbReference type="DNASU" id="407953"/>
<dbReference type="GeneID" id="407953"/>
<dbReference type="KEGG" id="xtr:407953"/>
<dbReference type="AGR" id="Xenbase:XB-GENE-974499"/>
<dbReference type="CTD" id="2644"/>
<dbReference type="Xenbase" id="XB-GENE-974499">
    <property type="gene designation" value="gchfr"/>
</dbReference>
<dbReference type="eggNOG" id="ENOG502S4A0">
    <property type="taxonomic scope" value="Eukaryota"/>
</dbReference>
<dbReference type="HOGENOM" id="CLU_195651_0_0_1"/>
<dbReference type="InParanoid" id="Q6NVA8"/>
<dbReference type="OMA" id="PNLMHYL"/>
<dbReference type="OrthoDB" id="64291at2759"/>
<dbReference type="PhylomeDB" id="Q6NVA8"/>
<dbReference type="TreeFam" id="TF329303"/>
<dbReference type="Reactome" id="R-XTR-1474151">
    <property type="pathway name" value="Tetrahydrobiopterin (BH4) synthesis, recycling, salvage and regulation"/>
</dbReference>
<dbReference type="Proteomes" id="UP000008143">
    <property type="component" value="Chromosome 8"/>
</dbReference>
<dbReference type="Bgee" id="ENSXETG00000021554">
    <property type="expression patterns" value="Expressed in liver and 12 other cell types or tissues"/>
</dbReference>
<dbReference type="GO" id="GO:0005829">
    <property type="term" value="C:cytosol"/>
    <property type="evidence" value="ECO:0007669"/>
    <property type="project" value="UniProtKB-SubCell"/>
</dbReference>
<dbReference type="GO" id="GO:0031965">
    <property type="term" value="C:nuclear membrane"/>
    <property type="evidence" value="ECO:0007669"/>
    <property type="project" value="UniProtKB-SubCell"/>
</dbReference>
<dbReference type="GO" id="GO:0009890">
    <property type="term" value="P:negative regulation of biosynthetic process"/>
    <property type="evidence" value="ECO:0007669"/>
    <property type="project" value="InterPro"/>
</dbReference>
<dbReference type="FunFam" id="3.30.1410.10:FF:000001">
    <property type="entry name" value="GTP cyclohydrolase 1 feedback regulatory protein"/>
    <property type="match status" value="1"/>
</dbReference>
<dbReference type="Gene3D" id="3.30.1410.10">
    <property type="entry name" value="GTP cyclohydrolase I feedback regulatory protein GFRP"/>
    <property type="match status" value="1"/>
</dbReference>
<dbReference type="InterPro" id="IPR036717">
    <property type="entry name" value="GFRP_sf"/>
</dbReference>
<dbReference type="InterPro" id="IPR009112">
    <property type="entry name" value="GTP_CycHdrlase_I_reg"/>
</dbReference>
<dbReference type="PANTHER" id="PTHR16852">
    <property type="entry name" value="GTP CYCLOHYDROLASE 1 FEEDBACK REGULATORY PROTEIN"/>
    <property type="match status" value="1"/>
</dbReference>
<dbReference type="PANTHER" id="PTHR16852:SF2">
    <property type="entry name" value="GTP CYCLOHYDROLASE 1 FEEDBACK REGULATORY PROTEIN"/>
    <property type="match status" value="1"/>
</dbReference>
<dbReference type="Pfam" id="PF06399">
    <property type="entry name" value="GFRP"/>
    <property type="match status" value="1"/>
</dbReference>
<dbReference type="SUPFAM" id="SSF69761">
    <property type="entry name" value="GTP cyclohydrolase I feedback regulatory protein, GFRP"/>
    <property type="match status" value="1"/>
</dbReference>
<feature type="chain" id="PRO_0000189680" description="GTP cyclohydrolase 1 feedback regulatory protein">
    <location>
        <begin position="1"/>
        <end position="84"/>
    </location>
</feature>